<evidence type="ECO:0000250" key="1"/>
<evidence type="ECO:0000255" key="2"/>
<evidence type="ECO:0000255" key="3">
    <source>
        <dbReference type="PROSITE-ProRule" id="PRU10035"/>
    </source>
</evidence>
<evidence type="ECO:0000255" key="4">
    <source>
        <dbReference type="PROSITE-ProRule" id="PRU10036"/>
    </source>
</evidence>
<evidence type="ECO:0000269" key="5">
    <source>
    </source>
</evidence>
<evidence type="ECO:0000305" key="6"/>
<proteinExistence type="evidence at protein level"/>
<comment type="function">
    <text>PLA2 catalyzes the calcium-dependent hydrolysis of the 2-acyl groups in 3-sn-phosphoglycerides.</text>
</comment>
<comment type="catalytic activity">
    <reaction evidence="3 4">
        <text>a 1,2-diacyl-sn-glycero-3-phosphocholine + H2O = a 1-acyl-sn-glycero-3-phosphocholine + a fatty acid + H(+)</text>
        <dbReference type="Rhea" id="RHEA:15801"/>
        <dbReference type="ChEBI" id="CHEBI:15377"/>
        <dbReference type="ChEBI" id="CHEBI:15378"/>
        <dbReference type="ChEBI" id="CHEBI:28868"/>
        <dbReference type="ChEBI" id="CHEBI:57643"/>
        <dbReference type="ChEBI" id="CHEBI:58168"/>
        <dbReference type="EC" id="3.1.1.4"/>
    </reaction>
</comment>
<comment type="cofactor">
    <cofactor evidence="1">
        <name>Ca(2+)</name>
        <dbReference type="ChEBI" id="CHEBI:29108"/>
    </cofactor>
    <text evidence="1">Binds 1 Ca(2+) ion.</text>
</comment>
<comment type="subcellular location">
    <subcellularLocation>
        <location>Secreted</location>
    </subcellularLocation>
</comment>
<comment type="tissue specificity">
    <text>Expressed by the venom gland.</text>
</comment>
<comment type="toxic dose">
    <text>LD(50) is 4.4 mg/kg by intravenous injection.</text>
</comment>
<comment type="similarity">
    <text evidence="6">Belongs to the phospholipase A2 family. Group I subfamily. D49 sub-subfamily.</text>
</comment>
<protein>
    <recommendedName>
        <fullName>Acidic phospholipase A2 2</fullName>
        <shortName>svPLA2</shortName>
        <ecNumber>3.1.1.4</ecNumber>
    </recommendedName>
    <alternativeName>
        <fullName>CM-III</fullName>
    </alternativeName>
    <alternativeName>
        <fullName>NnkPLA-II</fullName>
    </alternativeName>
    <alternativeName>
        <fullName>Phosphatidylcholine 2-acylhydrolase</fullName>
    </alternativeName>
</protein>
<sequence>MNPAHLLILAAVCVSSLGASSNRPMPLNLYQFKNMIQCTVPSRSWWDFADYGCYCGRGGSGTPVDDLDRCCQVHDNCYNEAEKISGCWPYFKTYSYECSQGTLTCKGGNNACAAAVCDCDRLAAICFAGAPYNNNNYNIDLKARCQ</sequence>
<organism>
    <name type="scientific">Naja kaouthia</name>
    <name type="common">Monocled cobra</name>
    <name type="synonym">Naja siamensis</name>
    <dbReference type="NCBI Taxonomy" id="8649"/>
    <lineage>
        <taxon>Eukaryota</taxon>
        <taxon>Metazoa</taxon>
        <taxon>Chordata</taxon>
        <taxon>Craniata</taxon>
        <taxon>Vertebrata</taxon>
        <taxon>Euteleostomi</taxon>
        <taxon>Lepidosauria</taxon>
        <taxon>Squamata</taxon>
        <taxon>Bifurcata</taxon>
        <taxon>Unidentata</taxon>
        <taxon>Episquamata</taxon>
        <taxon>Toxicofera</taxon>
        <taxon>Serpentes</taxon>
        <taxon>Colubroidea</taxon>
        <taxon>Elapidae</taxon>
        <taxon>Elapinae</taxon>
        <taxon>Naja</taxon>
    </lineage>
</organism>
<dbReference type="EC" id="3.1.1.4"/>
<dbReference type="EMBL" id="AB011389">
    <property type="protein sequence ID" value="BAA36404.1"/>
    <property type="molecule type" value="mRNA"/>
</dbReference>
<dbReference type="SMR" id="P00597"/>
<dbReference type="GO" id="GO:0005576">
    <property type="term" value="C:extracellular region"/>
    <property type="evidence" value="ECO:0007669"/>
    <property type="project" value="UniProtKB-SubCell"/>
</dbReference>
<dbReference type="GO" id="GO:0005509">
    <property type="term" value="F:calcium ion binding"/>
    <property type="evidence" value="ECO:0007669"/>
    <property type="project" value="InterPro"/>
</dbReference>
<dbReference type="GO" id="GO:0047498">
    <property type="term" value="F:calcium-dependent phospholipase A2 activity"/>
    <property type="evidence" value="ECO:0007669"/>
    <property type="project" value="TreeGrafter"/>
</dbReference>
<dbReference type="GO" id="GO:0005543">
    <property type="term" value="F:phospholipid binding"/>
    <property type="evidence" value="ECO:0007669"/>
    <property type="project" value="TreeGrafter"/>
</dbReference>
<dbReference type="GO" id="GO:0050482">
    <property type="term" value="P:arachidonate secretion"/>
    <property type="evidence" value="ECO:0007669"/>
    <property type="project" value="InterPro"/>
</dbReference>
<dbReference type="GO" id="GO:0016042">
    <property type="term" value="P:lipid catabolic process"/>
    <property type="evidence" value="ECO:0007669"/>
    <property type="project" value="UniProtKB-KW"/>
</dbReference>
<dbReference type="GO" id="GO:0006644">
    <property type="term" value="P:phospholipid metabolic process"/>
    <property type="evidence" value="ECO:0007669"/>
    <property type="project" value="InterPro"/>
</dbReference>
<dbReference type="CDD" id="cd00125">
    <property type="entry name" value="PLA2c"/>
    <property type="match status" value="1"/>
</dbReference>
<dbReference type="FunFam" id="1.20.90.10:FF:000007">
    <property type="entry name" value="Acidic phospholipase A2"/>
    <property type="match status" value="1"/>
</dbReference>
<dbReference type="Gene3D" id="1.20.90.10">
    <property type="entry name" value="Phospholipase A2 domain"/>
    <property type="match status" value="1"/>
</dbReference>
<dbReference type="InterPro" id="IPR001211">
    <property type="entry name" value="PLipase_A2"/>
</dbReference>
<dbReference type="InterPro" id="IPR033112">
    <property type="entry name" value="PLipase_A2_Asp_AS"/>
</dbReference>
<dbReference type="InterPro" id="IPR016090">
    <property type="entry name" value="PLipase_A2_dom"/>
</dbReference>
<dbReference type="InterPro" id="IPR036444">
    <property type="entry name" value="PLipase_A2_dom_sf"/>
</dbReference>
<dbReference type="InterPro" id="IPR033113">
    <property type="entry name" value="PLipase_A2_His_AS"/>
</dbReference>
<dbReference type="PANTHER" id="PTHR11716:SF94">
    <property type="entry name" value="PHOSPHOLIPASE A2"/>
    <property type="match status" value="1"/>
</dbReference>
<dbReference type="PANTHER" id="PTHR11716">
    <property type="entry name" value="PHOSPHOLIPASE A2 FAMILY MEMBER"/>
    <property type="match status" value="1"/>
</dbReference>
<dbReference type="Pfam" id="PF00068">
    <property type="entry name" value="Phospholip_A2_1"/>
    <property type="match status" value="1"/>
</dbReference>
<dbReference type="PRINTS" id="PR00389">
    <property type="entry name" value="PHPHLIPASEA2"/>
</dbReference>
<dbReference type="SMART" id="SM00085">
    <property type="entry name" value="PA2c"/>
    <property type="match status" value="1"/>
</dbReference>
<dbReference type="SUPFAM" id="SSF48619">
    <property type="entry name" value="Phospholipase A2, PLA2"/>
    <property type="match status" value="1"/>
</dbReference>
<dbReference type="PROSITE" id="PS00119">
    <property type="entry name" value="PA2_ASP"/>
    <property type="match status" value="1"/>
</dbReference>
<dbReference type="PROSITE" id="PS00118">
    <property type="entry name" value="PA2_HIS"/>
    <property type="match status" value="1"/>
</dbReference>
<reference key="1">
    <citation type="journal article" date="2000" name="Toxicon">
        <title>Regional and accelerated molecular evolution in group I snake venom gland phospholipase A2 isozymes.</title>
        <authorList>
            <person name="Chuman Y."/>
            <person name="Nobuhisa I."/>
            <person name="Ogawa T."/>
            <person name="Deshimaru M."/>
            <person name="Chijiwa T."/>
            <person name="Tan N.-T."/>
            <person name="Fukumaki Y."/>
            <person name="Shimohigashi Y."/>
            <person name="Ducancel F."/>
            <person name="Boulain J.-C."/>
            <person name="Menez A."/>
            <person name="Ohno M."/>
        </authorList>
    </citation>
    <scope>NUCLEOTIDE SEQUENCE [MRNA]</scope>
    <source>
        <tissue>Venom gland</tissue>
    </source>
</reference>
<reference key="2">
    <citation type="journal article" date="1980" name="Eur. J. Biochem.">
        <title>Purification, some properties and amino-acid sequences of two phospholipases A (CM-II and CM-III) from Naja naja kaouthia venom.</title>
        <authorList>
            <person name="Joubert F.J."/>
            <person name="Taljaard N."/>
        </authorList>
    </citation>
    <scope>PROTEIN SEQUENCE OF 28-146</scope>
    <source>
        <tissue>Venom</tissue>
    </source>
</reference>
<feature type="signal peptide" evidence="2">
    <location>
        <begin position="1"/>
        <end position="21"/>
    </location>
</feature>
<feature type="propeptide" id="PRO_0000022922" evidence="5">
    <location>
        <begin position="22"/>
        <end position="27"/>
    </location>
</feature>
<feature type="chain" id="PRO_0000022923" description="Acidic phospholipase A2 2">
    <location>
        <begin position="28"/>
        <end position="146"/>
    </location>
</feature>
<feature type="active site" evidence="1">
    <location>
        <position position="74"/>
    </location>
</feature>
<feature type="active site" evidence="1">
    <location>
        <position position="120"/>
    </location>
</feature>
<feature type="binding site" evidence="1">
    <location>
        <position position="54"/>
    </location>
    <ligand>
        <name>Ca(2+)</name>
        <dbReference type="ChEBI" id="CHEBI:29108"/>
    </ligand>
</feature>
<feature type="binding site" evidence="1">
    <location>
        <position position="56"/>
    </location>
    <ligand>
        <name>Ca(2+)</name>
        <dbReference type="ChEBI" id="CHEBI:29108"/>
    </ligand>
</feature>
<feature type="binding site" evidence="1">
    <location>
        <position position="58"/>
    </location>
    <ligand>
        <name>Ca(2+)</name>
        <dbReference type="ChEBI" id="CHEBI:29108"/>
    </ligand>
</feature>
<feature type="binding site" evidence="1">
    <location>
        <position position="75"/>
    </location>
    <ligand>
        <name>Ca(2+)</name>
        <dbReference type="ChEBI" id="CHEBI:29108"/>
    </ligand>
</feature>
<feature type="disulfide bond" evidence="1">
    <location>
        <begin position="38"/>
        <end position="98"/>
    </location>
</feature>
<feature type="disulfide bond" evidence="1">
    <location>
        <begin position="53"/>
        <end position="145"/>
    </location>
</feature>
<feature type="disulfide bond" evidence="1">
    <location>
        <begin position="55"/>
        <end position="71"/>
    </location>
</feature>
<feature type="disulfide bond" evidence="1">
    <location>
        <begin position="70"/>
        <end position="126"/>
    </location>
</feature>
<feature type="disulfide bond" evidence="1">
    <location>
        <begin position="77"/>
        <end position="119"/>
    </location>
</feature>
<feature type="disulfide bond" evidence="1">
    <location>
        <begin position="87"/>
        <end position="112"/>
    </location>
</feature>
<feature type="disulfide bond" evidence="1">
    <location>
        <begin position="105"/>
        <end position="117"/>
    </location>
</feature>
<feature type="sequence conflict" description="In Ref. 2; AA sequence." evidence="6" ref="2">
    <original>D</original>
    <variation>N</variation>
    <location>
        <position position="47"/>
    </location>
</feature>
<feature type="sequence conflict" description="In Ref. 2; AA sequence." evidence="6" ref="2">
    <original>N</original>
    <variation>D</variation>
    <location>
        <position position="79"/>
    </location>
</feature>
<keyword id="KW-0106">Calcium</keyword>
<keyword id="KW-0903">Direct protein sequencing</keyword>
<keyword id="KW-1015">Disulfide bond</keyword>
<keyword id="KW-0378">Hydrolase</keyword>
<keyword id="KW-0442">Lipid degradation</keyword>
<keyword id="KW-0443">Lipid metabolism</keyword>
<keyword id="KW-0479">Metal-binding</keyword>
<keyword id="KW-0964">Secreted</keyword>
<keyword id="KW-0732">Signal</keyword>
<accession>P00597</accession>
<accession>Q9PWS1</accession>
<name>PA2A2_NAJKA</name>